<proteinExistence type="inferred from homology"/>
<gene>
    <name type="primary">yidC</name>
    <name type="ordered locus">Cgl2940</name>
    <name type="ordered locus">cg3252</name>
</gene>
<accession>Q8NLK2</accession>
<name>YIDC_CORGL</name>
<keyword id="KW-1003">Cell membrane</keyword>
<keyword id="KW-0143">Chaperone</keyword>
<keyword id="KW-0472">Membrane</keyword>
<keyword id="KW-0653">Protein transport</keyword>
<keyword id="KW-1185">Reference proteome</keyword>
<keyword id="KW-0812">Transmembrane</keyword>
<keyword id="KW-1133">Transmembrane helix</keyword>
<keyword id="KW-0813">Transport</keyword>
<feature type="chain" id="PRO_0000124709" description="Membrane protein insertase YidC">
    <location>
        <begin position="1"/>
        <end position="422"/>
    </location>
</feature>
<feature type="transmembrane region" description="Helical" evidence="2">
    <location>
        <begin position="30"/>
        <end position="50"/>
    </location>
</feature>
<feature type="transmembrane region" description="Helical" evidence="2">
    <location>
        <begin position="103"/>
        <end position="123"/>
    </location>
</feature>
<feature type="transmembrane region" description="Helical" evidence="2">
    <location>
        <begin position="183"/>
        <end position="203"/>
    </location>
</feature>
<feature type="transmembrane region" description="Helical" evidence="2">
    <location>
        <begin position="226"/>
        <end position="246"/>
    </location>
</feature>
<feature type="transmembrane region" description="Helical" evidence="2">
    <location>
        <begin position="253"/>
        <end position="273"/>
    </location>
</feature>
<feature type="region of interest" description="Disordered" evidence="3">
    <location>
        <begin position="350"/>
        <end position="422"/>
    </location>
</feature>
<feature type="compositionally biased region" description="Basic and acidic residues" evidence="3">
    <location>
        <begin position="350"/>
        <end position="362"/>
    </location>
</feature>
<feature type="compositionally biased region" description="Polar residues" evidence="3">
    <location>
        <begin position="401"/>
        <end position="413"/>
    </location>
</feature>
<dbReference type="EMBL" id="BA000036">
    <property type="protein sequence ID" value="BAC00334.1"/>
    <property type="status" value="ALT_INIT"/>
    <property type="molecule type" value="Genomic_DNA"/>
</dbReference>
<dbReference type="EMBL" id="BX927156">
    <property type="protein sequence ID" value="CAF20964.1"/>
    <property type="molecule type" value="Genomic_DNA"/>
</dbReference>
<dbReference type="RefSeq" id="NP_602127.1">
    <property type="nucleotide sequence ID" value="NC_003450.3"/>
</dbReference>
<dbReference type="RefSeq" id="WP_011015508.1">
    <property type="nucleotide sequence ID" value="NC_006958.1"/>
</dbReference>
<dbReference type="SMR" id="Q8NLK2"/>
<dbReference type="STRING" id="196627.cg3252"/>
<dbReference type="GeneID" id="1020882"/>
<dbReference type="KEGG" id="cgb:cg3252"/>
<dbReference type="KEGG" id="cgl:Cgl2940"/>
<dbReference type="PATRIC" id="fig|196627.13.peg.2866"/>
<dbReference type="eggNOG" id="COG0706">
    <property type="taxonomic scope" value="Bacteria"/>
</dbReference>
<dbReference type="HOGENOM" id="CLU_036138_2_0_11"/>
<dbReference type="OrthoDB" id="9780552at2"/>
<dbReference type="BioCyc" id="CORYNE:G18NG-12558-MONOMER"/>
<dbReference type="Proteomes" id="UP000000582">
    <property type="component" value="Chromosome"/>
</dbReference>
<dbReference type="Proteomes" id="UP000001009">
    <property type="component" value="Chromosome"/>
</dbReference>
<dbReference type="GO" id="GO:0005886">
    <property type="term" value="C:plasma membrane"/>
    <property type="evidence" value="ECO:0007669"/>
    <property type="project" value="UniProtKB-SubCell"/>
</dbReference>
<dbReference type="GO" id="GO:0032977">
    <property type="term" value="F:membrane insertase activity"/>
    <property type="evidence" value="ECO:0007669"/>
    <property type="project" value="InterPro"/>
</dbReference>
<dbReference type="GO" id="GO:0051205">
    <property type="term" value="P:protein insertion into membrane"/>
    <property type="evidence" value="ECO:0007669"/>
    <property type="project" value="TreeGrafter"/>
</dbReference>
<dbReference type="GO" id="GO:0015031">
    <property type="term" value="P:protein transport"/>
    <property type="evidence" value="ECO:0007669"/>
    <property type="project" value="UniProtKB-KW"/>
</dbReference>
<dbReference type="CDD" id="cd20070">
    <property type="entry name" value="5TM_YidC_Alb3"/>
    <property type="match status" value="1"/>
</dbReference>
<dbReference type="InterPro" id="IPR001708">
    <property type="entry name" value="YidC/ALB3/OXA1/COX18"/>
</dbReference>
<dbReference type="InterPro" id="IPR028055">
    <property type="entry name" value="YidC/Oxa/ALB_C"/>
</dbReference>
<dbReference type="InterPro" id="IPR047196">
    <property type="entry name" value="YidC_ALB_C"/>
</dbReference>
<dbReference type="NCBIfam" id="NF001300">
    <property type="entry name" value="PRK00247.1"/>
    <property type="match status" value="1"/>
</dbReference>
<dbReference type="NCBIfam" id="TIGR03592">
    <property type="entry name" value="yidC_oxa1_cterm"/>
    <property type="match status" value="1"/>
</dbReference>
<dbReference type="PANTHER" id="PTHR12428:SF65">
    <property type="entry name" value="CYTOCHROME C OXIDASE ASSEMBLY PROTEIN COX18, MITOCHONDRIAL"/>
    <property type="match status" value="1"/>
</dbReference>
<dbReference type="PANTHER" id="PTHR12428">
    <property type="entry name" value="OXA1"/>
    <property type="match status" value="1"/>
</dbReference>
<dbReference type="Pfam" id="PF02096">
    <property type="entry name" value="60KD_IMP"/>
    <property type="match status" value="1"/>
</dbReference>
<organism>
    <name type="scientific">Corynebacterium glutamicum (strain ATCC 13032 / DSM 20300 / JCM 1318 / BCRC 11384 / CCUG 27702 / LMG 3730 / NBRC 12168 / NCIMB 10025 / NRRL B-2784 / 534)</name>
    <dbReference type="NCBI Taxonomy" id="196627"/>
    <lineage>
        <taxon>Bacteria</taxon>
        <taxon>Bacillati</taxon>
        <taxon>Actinomycetota</taxon>
        <taxon>Actinomycetes</taxon>
        <taxon>Mycobacteriales</taxon>
        <taxon>Corynebacteriaceae</taxon>
        <taxon>Corynebacterium</taxon>
    </lineage>
</organism>
<reference key="1">
    <citation type="journal article" date="2003" name="Appl. Microbiol. Biotechnol.">
        <title>The Corynebacterium glutamicum genome: features and impacts on biotechnological processes.</title>
        <authorList>
            <person name="Ikeda M."/>
            <person name="Nakagawa S."/>
        </authorList>
    </citation>
    <scope>NUCLEOTIDE SEQUENCE [LARGE SCALE GENOMIC DNA]</scope>
    <source>
        <strain>ATCC 13032 / DSM 20300 / JCM 1318 / BCRC 11384 / CCUG 27702 / LMG 3730 / NBRC 12168 / NCIMB 10025 / NRRL B-2784 / 534</strain>
    </source>
</reference>
<reference key="2">
    <citation type="journal article" date="2003" name="J. Biotechnol.">
        <title>The complete Corynebacterium glutamicum ATCC 13032 genome sequence and its impact on the production of L-aspartate-derived amino acids and vitamins.</title>
        <authorList>
            <person name="Kalinowski J."/>
            <person name="Bathe B."/>
            <person name="Bartels D."/>
            <person name="Bischoff N."/>
            <person name="Bott M."/>
            <person name="Burkovski A."/>
            <person name="Dusch N."/>
            <person name="Eggeling L."/>
            <person name="Eikmanns B.J."/>
            <person name="Gaigalat L."/>
            <person name="Goesmann A."/>
            <person name="Hartmann M."/>
            <person name="Huthmacher K."/>
            <person name="Kraemer R."/>
            <person name="Linke B."/>
            <person name="McHardy A.C."/>
            <person name="Meyer F."/>
            <person name="Moeckel B."/>
            <person name="Pfefferle W."/>
            <person name="Puehler A."/>
            <person name="Rey D.A."/>
            <person name="Rueckert C."/>
            <person name="Rupp O."/>
            <person name="Sahm H."/>
            <person name="Wendisch V.F."/>
            <person name="Wiegraebe I."/>
            <person name="Tauch A."/>
        </authorList>
    </citation>
    <scope>NUCLEOTIDE SEQUENCE [LARGE SCALE GENOMIC DNA]</scope>
    <source>
        <strain>ATCC 13032 / DSM 20300 / JCM 1318 / BCRC 11384 / CCUG 27702 / LMG 3730 / NBRC 12168 / NCIMB 10025 / NRRL B-2784 / 534</strain>
    </source>
</reference>
<sequence length="422" mass="48125">MLDILIYPVSGVMKLWHLLLHNVAGLDDSLAWFFSLFGLVITIRAIIAPFTWQMYKSGRTAAHIRPHRAALREEYKGKYDEASIRELQKRQNDLNKEYGINPLAGCVPGLIQIPIVLGLYWALLRMARPEGGLENPVFQSIGFLTPEEVESFLAGRVSNVPLPAYVSMPTEQLKYLSTTQAEVLSFVLPLFITAAILTAINMAMSMYRSFQTNDYASGFSNGMLKFMIVMSILAPIFPLSLGLTGPFPTAIALYWVSNNLWTLLQTIIMMVILERKYPLTDDFKVHHLEQRDIYRAKQKEKRIFLWTRRKNRALMILTPWNASTLHATNVELTKTRTAEINEAKQARKEIANKRRETQREMNRAAMQRLKQRRAEVKAKKKGLIDASPNEDTPSENEETKLSSPQVEPTTTAEPNREPSQED</sequence>
<protein>
    <recommendedName>
        <fullName>Membrane protein insertase YidC</fullName>
    </recommendedName>
    <alternativeName>
        <fullName>Foldase YidC</fullName>
    </alternativeName>
    <alternativeName>
        <fullName>Membrane integrase YidC</fullName>
    </alternativeName>
    <alternativeName>
        <fullName>Membrane protein YidC</fullName>
    </alternativeName>
</protein>
<comment type="function">
    <text evidence="1">Required for the insertion and/or proper folding and/or complex formation of integral membrane proteins into the membrane. Involved in integration of membrane proteins that insert both dependently and independently of the Sec translocase complex, as well as at least some lipoproteins. Aids folding of multispanning membrane proteins (By similarity).</text>
</comment>
<comment type="subunit">
    <text evidence="1">Interacts with the Sec translocase complex via SecD. Specifically interacts with transmembrane segments of nascent integral membrane proteins during membrane integration (By similarity).</text>
</comment>
<comment type="subcellular location">
    <subcellularLocation>
        <location evidence="1">Cell membrane</location>
        <topology evidence="1">Multi-pass membrane protein</topology>
    </subcellularLocation>
</comment>
<comment type="similarity">
    <text evidence="4">Belongs to the OXA1/ALB3/YidC family. Type 1 subfamily.</text>
</comment>
<comment type="sequence caution" evidence="4">
    <conflict type="erroneous initiation">
        <sequence resource="EMBL-CDS" id="BAC00334"/>
    </conflict>
    <text>Extended N-terminus.</text>
</comment>
<evidence type="ECO:0000250" key="1"/>
<evidence type="ECO:0000255" key="2"/>
<evidence type="ECO:0000256" key="3">
    <source>
        <dbReference type="SAM" id="MobiDB-lite"/>
    </source>
</evidence>
<evidence type="ECO:0000305" key="4"/>